<reference key="1">
    <citation type="journal article" date="2008" name="Genome Res.">
        <title>Comparative genome analysis of Salmonella enteritidis PT4 and Salmonella gallinarum 287/91 provides insights into evolutionary and host adaptation pathways.</title>
        <authorList>
            <person name="Thomson N.R."/>
            <person name="Clayton D.J."/>
            <person name="Windhorst D."/>
            <person name="Vernikos G."/>
            <person name="Davidson S."/>
            <person name="Churcher C."/>
            <person name="Quail M.A."/>
            <person name="Stevens M."/>
            <person name="Jones M.A."/>
            <person name="Watson M."/>
            <person name="Barron A."/>
            <person name="Layton A."/>
            <person name="Pickard D."/>
            <person name="Kingsley R.A."/>
            <person name="Bignell A."/>
            <person name="Clark L."/>
            <person name="Harris B."/>
            <person name="Ormond D."/>
            <person name="Abdellah Z."/>
            <person name="Brooks K."/>
            <person name="Cherevach I."/>
            <person name="Chillingworth T."/>
            <person name="Woodward J."/>
            <person name="Norberczak H."/>
            <person name="Lord A."/>
            <person name="Arrowsmith C."/>
            <person name="Jagels K."/>
            <person name="Moule S."/>
            <person name="Mungall K."/>
            <person name="Saunders M."/>
            <person name="Whitehead S."/>
            <person name="Chabalgoity J.A."/>
            <person name="Maskell D."/>
            <person name="Humphreys T."/>
            <person name="Roberts M."/>
            <person name="Barrow P.A."/>
            <person name="Dougan G."/>
            <person name="Parkhill J."/>
        </authorList>
    </citation>
    <scope>NUCLEOTIDE SEQUENCE [LARGE SCALE GENOMIC DNA]</scope>
    <source>
        <strain>P125109</strain>
    </source>
</reference>
<keyword id="KW-0067">ATP-binding</keyword>
<keyword id="KW-0119">Carbohydrate metabolism</keyword>
<keyword id="KW-0963">Cytoplasm</keyword>
<keyword id="KW-0299">Galactose metabolism</keyword>
<keyword id="KW-0418">Kinase</keyword>
<keyword id="KW-0460">Magnesium</keyword>
<keyword id="KW-0479">Metal-binding</keyword>
<keyword id="KW-0547">Nucleotide-binding</keyword>
<keyword id="KW-0808">Transferase</keyword>
<sequence length="382" mass="41246">MNLKEKTRALFAEIFGYPATHTIQAPGRVNLIGEHTDYNDGFVLPCAIDYQTVISCAPRDDRTVRVIAADYDNQVDEFSLDAPIVTHDSQQWSNYVRGVVKHLQQRNNAFGGVDMVISGNVPQGAGLSSSASLEVAVGTVFQQLYHLPLDGAQIALNGQEAENQFVGCNCGIMDQLISALGKKDHALLIDCRTLGAKAVSMPKGVAVVIINSNFKRTLVGSEYNTRREQCETGARFFQQPALRDVSLEAFNAVASELDPVVAKRVRHVLSENARTVEAASALEKGDLQRMGQLMAESHASMRDDFEITVPQIDTLVDIVKATIGDQGGVRMTGGGFGGCVVALIPEDLVPAVQQAVAQQYEAKTGIKETFYVCKPSQGAGQC</sequence>
<accession>B5QX45</accession>
<evidence type="ECO:0000255" key="1">
    <source>
        <dbReference type="HAMAP-Rule" id="MF_00246"/>
    </source>
</evidence>
<name>GAL1_SALEP</name>
<feature type="chain" id="PRO_1000100840" description="Galactokinase">
    <location>
        <begin position="1"/>
        <end position="382"/>
    </location>
</feature>
<feature type="active site" description="Proton acceptor" evidence="1">
    <location>
        <position position="174"/>
    </location>
</feature>
<feature type="binding site" evidence="1">
    <location>
        <begin position="34"/>
        <end position="37"/>
    </location>
    <ligand>
        <name>substrate</name>
    </ligand>
</feature>
<feature type="binding site" evidence="1">
    <location>
        <begin position="124"/>
        <end position="130"/>
    </location>
    <ligand>
        <name>ATP</name>
        <dbReference type="ChEBI" id="CHEBI:30616"/>
    </ligand>
</feature>
<feature type="binding site" evidence="1">
    <location>
        <position position="130"/>
    </location>
    <ligand>
        <name>Mg(2+)</name>
        <dbReference type="ChEBI" id="CHEBI:18420"/>
    </ligand>
</feature>
<feature type="binding site" evidence="1">
    <location>
        <position position="162"/>
    </location>
    <ligand>
        <name>Mg(2+)</name>
        <dbReference type="ChEBI" id="CHEBI:18420"/>
    </ligand>
</feature>
<feature type="binding site" evidence="1">
    <location>
        <position position="223"/>
    </location>
    <ligand>
        <name>substrate</name>
    </ligand>
</feature>
<feature type="site" description="Transition state stabilizer" evidence="1">
    <location>
        <position position="28"/>
    </location>
</feature>
<protein>
    <recommendedName>
        <fullName evidence="1">Galactokinase</fullName>
        <ecNumber evidence="1">2.7.1.6</ecNumber>
    </recommendedName>
    <alternativeName>
        <fullName evidence="1">Galactose kinase</fullName>
    </alternativeName>
</protein>
<gene>
    <name evidence="1" type="primary">galK</name>
    <name type="ordered locus">SEN0719</name>
</gene>
<proteinExistence type="inferred from homology"/>
<dbReference type="EC" id="2.7.1.6" evidence="1"/>
<dbReference type="EMBL" id="AM933172">
    <property type="protein sequence ID" value="CAR32305.1"/>
    <property type="molecule type" value="Genomic_DNA"/>
</dbReference>
<dbReference type="RefSeq" id="WP_001049364.1">
    <property type="nucleotide sequence ID" value="NC_011294.1"/>
</dbReference>
<dbReference type="SMR" id="B5QX45"/>
<dbReference type="KEGG" id="set:SEN0719"/>
<dbReference type="HOGENOM" id="CLU_017814_2_1_6"/>
<dbReference type="UniPathway" id="UPA00214"/>
<dbReference type="Proteomes" id="UP000000613">
    <property type="component" value="Chromosome"/>
</dbReference>
<dbReference type="GO" id="GO:0005829">
    <property type="term" value="C:cytosol"/>
    <property type="evidence" value="ECO:0007669"/>
    <property type="project" value="TreeGrafter"/>
</dbReference>
<dbReference type="GO" id="GO:0005524">
    <property type="term" value="F:ATP binding"/>
    <property type="evidence" value="ECO:0007669"/>
    <property type="project" value="UniProtKB-UniRule"/>
</dbReference>
<dbReference type="GO" id="GO:0004335">
    <property type="term" value="F:galactokinase activity"/>
    <property type="evidence" value="ECO:0007669"/>
    <property type="project" value="UniProtKB-UniRule"/>
</dbReference>
<dbReference type="GO" id="GO:0000287">
    <property type="term" value="F:magnesium ion binding"/>
    <property type="evidence" value="ECO:0007669"/>
    <property type="project" value="UniProtKB-UniRule"/>
</dbReference>
<dbReference type="GO" id="GO:0006012">
    <property type="term" value="P:galactose metabolic process"/>
    <property type="evidence" value="ECO:0007669"/>
    <property type="project" value="UniProtKB-UniRule"/>
</dbReference>
<dbReference type="FunFam" id="3.30.230.10:FF:000017">
    <property type="entry name" value="Galactokinase"/>
    <property type="match status" value="1"/>
</dbReference>
<dbReference type="FunFam" id="3.30.70.890:FF:000001">
    <property type="entry name" value="Galactokinase"/>
    <property type="match status" value="1"/>
</dbReference>
<dbReference type="Gene3D" id="3.30.230.10">
    <property type="match status" value="1"/>
</dbReference>
<dbReference type="Gene3D" id="3.30.70.890">
    <property type="entry name" value="GHMP kinase, C-terminal domain"/>
    <property type="match status" value="1"/>
</dbReference>
<dbReference type="HAMAP" id="MF_00246">
    <property type="entry name" value="Galactokinase"/>
    <property type="match status" value="1"/>
</dbReference>
<dbReference type="InterPro" id="IPR000705">
    <property type="entry name" value="Galactokinase"/>
</dbReference>
<dbReference type="InterPro" id="IPR022963">
    <property type="entry name" value="Galactokinase_bac"/>
</dbReference>
<dbReference type="InterPro" id="IPR019741">
    <property type="entry name" value="Galactokinase_CS"/>
</dbReference>
<dbReference type="InterPro" id="IPR019539">
    <property type="entry name" value="GalKase_N"/>
</dbReference>
<dbReference type="InterPro" id="IPR013750">
    <property type="entry name" value="GHMP_kinase_C_dom"/>
</dbReference>
<dbReference type="InterPro" id="IPR036554">
    <property type="entry name" value="GHMP_kinase_C_sf"/>
</dbReference>
<dbReference type="InterPro" id="IPR006204">
    <property type="entry name" value="GHMP_kinase_N_dom"/>
</dbReference>
<dbReference type="InterPro" id="IPR006203">
    <property type="entry name" value="GHMP_knse_ATP-bd_CS"/>
</dbReference>
<dbReference type="InterPro" id="IPR006206">
    <property type="entry name" value="Mevalonate/galactokinase"/>
</dbReference>
<dbReference type="InterPro" id="IPR020568">
    <property type="entry name" value="Ribosomal_Su5_D2-typ_SF"/>
</dbReference>
<dbReference type="InterPro" id="IPR014721">
    <property type="entry name" value="Ribsml_uS5_D2-typ_fold_subgr"/>
</dbReference>
<dbReference type="NCBIfam" id="TIGR00131">
    <property type="entry name" value="gal_kin"/>
    <property type="match status" value="1"/>
</dbReference>
<dbReference type="NCBIfam" id="NF003472">
    <property type="entry name" value="PRK05101.1"/>
    <property type="match status" value="1"/>
</dbReference>
<dbReference type="PANTHER" id="PTHR10457:SF7">
    <property type="entry name" value="GALACTOKINASE-RELATED"/>
    <property type="match status" value="1"/>
</dbReference>
<dbReference type="PANTHER" id="PTHR10457">
    <property type="entry name" value="MEVALONATE KINASE/GALACTOKINASE"/>
    <property type="match status" value="1"/>
</dbReference>
<dbReference type="Pfam" id="PF10509">
    <property type="entry name" value="GalKase_gal_bdg"/>
    <property type="match status" value="1"/>
</dbReference>
<dbReference type="Pfam" id="PF08544">
    <property type="entry name" value="GHMP_kinases_C"/>
    <property type="match status" value="1"/>
</dbReference>
<dbReference type="Pfam" id="PF00288">
    <property type="entry name" value="GHMP_kinases_N"/>
    <property type="match status" value="1"/>
</dbReference>
<dbReference type="PIRSF" id="PIRSF000530">
    <property type="entry name" value="Galactokinase"/>
    <property type="match status" value="1"/>
</dbReference>
<dbReference type="PRINTS" id="PR00473">
    <property type="entry name" value="GALCTOKINASE"/>
</dbReference>
<dbReference type="PRINTS" id="PR00959">
    <property type="entry name" value="MEVGALKINASE"/>
</dbReference>
<dbReference type="SUPFAM" id="SSF55060">
    <property type="entry name" value="GHMP Kinase, C-terminal domain"/>
    <property type="match status" value="1"/>
</dbReference>
<dbReference type="SUPFAM" id="SSF54211">
    <property type="entry name" value="Ribosomal protein S5 domain 2-like"/>
    <property type="match status" value="1"/>
</dbReference>
<dbReference type="PROSITE" id="PS00106">
    <property type="entry name" value="GALACTOKINASE"/>
    <property type="match status" value="1"/>
</dbReference>
<dbReference type="PROSITE" id="PS00627">
    <property type="entry name" value="GHMP_KINASES_ATP"/>
    <property type="match status" value="1"/>
</dbReference>
<organism>
    <name type="scientific">Salmonella enteritidis PT4 (strain P125109)</name>
    <dbReference type="NCBI Taxonomy" id="550537"/>
    <lineage>
        <taxon>Bacteria</taxon>
        <taxon>Pseudomonadati</taxon>
        <taxon>Pseudomonadota</taxon>
        <taxon>Gammaproteobacteria</taxon>
        <taxon>Enterobacterales</taxon>
        <taxon>Enterobacteriaceae</taxon>
        <taxon>Salmonella</taxon>
    </lineage>
</organism>
<comment type="function">
    <text evidence="1">Catalyzes the transfer of the gamma-phosphate of ATP to D-galactose to form alpha-D-galactose-1-phosphate (Gal-1-P).</text>
</comment>
<comment type="catalytic activity">
    <reaction evidence="1">
        <text>alpha-D-galactose + ATP = alpha-D-galactose 1-phosphate + ADP + H(+)</text>
        <dbReference type="Rhea" id="RHEA:13553"/>
        <dbReference type="ChEBI" id="CHEBI:15378"/>
        <dbReference type="ChEBI" id="CHEBI:28061"/>
        <dbReference type="ChEBI" id="CHEBI:30616"/>
        <dbReference type="ChEBI" id="CHEBI:58336"/>
        <dbReference type="ChEBI" id="CHEBI:456216"/>
        <dbReference type="EC" id="2.7.1.6"/>
    </reaction>
</comment>
<comment type="pathway">
    <text evidence="1">Carbohydrate metabolism; galactose metabolism.</text>
</comment>
<comment type="subcellular location">
    <subcellularLocation>
        <location evidence="1">Cytoplasm</location>
    </subcellularLocation>
</comment>
<comment type="similarity">
    <text evidence="1">Belongs to the GHMP kinase family. GalK subfamily.</text>
</comment>